<gene>
    <name evidence="1" type="primary">gpmA</name>
    <name type="ordered locus">DvMF_1462</name>
</gene>
<evidence type="ECO:0000255" key="1">
    <source>
        <dbReference type="HAMAP-Rule" id="MF_01039"/>
    </source>
</evidence>
<evidence type="ECO:0000256" key="2">
    <source>
        <dbReference type="SAM" id="MobiDB-lite"/>
    </source>
</evidence>
<protein>
    <recommendedName>
        <fullName evidence="1">2,3-bisphosphoglycerate-dependent phosphoglycerate mutase</fullName>
        <shortName evidence="1">BPG-dependent PGAM</shortName>
        <shortName evidence="1">PGAM</shortName>
        <shortName evidence="1">Phosphoglyceromutase</shortName>
        <shortName evidence="1">dPGM</shortName>
        <ecNumber evidence="1">5.4.2.11</ecNumber>
    </recommendedName>
</protein>
<sequence>MHTLVLLRHGQSAWNLENRFTGWTDVDLSPEGEQEARDAARLLTDEGLTFDVCHTSVLTRAIRTLYIVQHEMGLSWLPVHKHWRLNERHYGGLQGLDKAETAARFGEEQVFEWRRSYDTPPPPLPADDPRSPAGDARYAGLAPDVLPASESLKETVARVLPYWHDVIAPQVLAGQRVLVAAHGNSLRALVMHLDGMTPEAVTKLNIPTGLPLVYTLDGTLRPLAHRYLGDPAVAEAKAKAVAAQGAARK</sequence>
<proteinExistence type="inferred from homology"/>
<name>GPMA_NITV9</name>
<comment type="function">
    <text evidence="1">Catalyzes the interconversion of 2-phosphoglycerate and 3-phosphoglycerate.</text>
</comment>
<comment type="catalytic activity">
    <reaction evidence="1">
        <text>(2R)-2-phosphoglycerate = (2R)-3-phosphoglycerate</text>
        <dbReference type="Rhea" id="RHEA:15901"/>
        <dbReference type="ChEBI" id="CHEBI:58272"/>
        <dbReference type="ChEBI" id="CHEBI:58289"/>
        <dbReference type="EC" id="5.4.2.11"/>
    </reaction>
</comment>
<comment type="pathway">
    <text evidence="1">Carbohydrate degradation; glycolysis; pyruvate from D-glyceraldehyde 3-phosphate: step 3/5.</text>
</comment>
<comment type="subunit">
    <text evidence="1">Homodimer.</text>
</comment>
<comment type="similarity">
    <text evidence="1">Belongs to the phosphoglycerate mutase family. BPG-dependent PGAM subfamily.</text>
</comment>
<dbReference type="EC" id="5.4.2.11" evidence="1"/>
<dbReference type="EMBL" id="CP001197">
    <property type="protein sequence ID" value="ACL08410.1"/>
    <property type="molecule type" value="Genomic_DNA"/>
</dbReference>
<dbReference type="SMR" id="B8DLN4"/>
<dbReference type="STRING" id="883.DvMF_1462"/>
<dbReference type="KEGG" id="dvm:DvMF_1462"/>
<dbReference type="eggNOG" id="COG0588">
    <property type="taxonomic scope" value="Bacteria"/>
</dbReference>
<dbReference type="HOGENOM" id="CLU_033323_1_1_7"/>
<dbReference type="OrthoDB" id="9781415at2"/>
<dbReference type="UniPathway" id="UPA00109">
    <property type="reaction ID" value="UER00186"/>
</dbReference>
<dbReference type="GO" id="GO:0004619">
    <property type="term" value="F:phosphoglycerate mutase activity"/>
    <property type="evidence" value="ECO:0007669"/>
    <property type="project" value="UniProtKB-EC"/>
</dbReference>
<dbReference type="GO" id="GO:0006094">
    <property type="term" value="P:gluconeogenesis"/>
    <property type="evidence" value="ECO:0007669"/>
    <property type="project" value="UniProtKB-UniRule"/>
</dbReference>
<dbReference type="GO" id="GO:0006096">
    <property type="term" value="P:glycolytic process"/>
    <property type="evidence" value="ECO:0007669"/>
    <property type="project" value="UniProtKB-UniRule"/>
</dbReference>
<dbReference type="CDD" id="cd07067">
    <property type="entry name" value="HP_PGM_like"/>
    <property type="match status" value="1"/>
</dbReference>
<dbReference type="FunFam" id="3.40.50.1240:FF:000003">
    <property type="entry name" value="2,3-bisphosphoglycerate-dependent phosphoglycerate mutase"/>
    <property type="match status" value="1"/>
</dbReference>
<dbReference type="Gene3D" id="3.40.50.1240">
    <property type="entry name" value="Phosphoglycerate mutase-like"/>
    <property type="match status" value="1"/>
</dbReference>
<dbReference type="HAMAP" id="MF_01039">
    <property type="entry name" value="PGAM_GpmA"/>
    <property type="match status" value="1"/>
</dbReference>
<dbReference type="InterPro" id="IPR013078">
    <property type="entry name" value="His_Pase_superF_clade-1"/>
</dbReference>
<dbReference type="InterPro" id="IPR029033">
    <property type="entry name" value="His_PPase_superfam"/>
</dbReference>
<dbReference type="InterPro" id="IPR001345">
    <property type="entry name" value="PG/BPGM_mutase_AS"/>
</dbReference>
<dbReference type="InterPro" id="IPR005952">
    <property type="entry name" value="Phosphogly_mut1"/>
</dbReference>
<dbReference type="NCBIfam" id="TIGR01258">
    <property type="entry name" value="pgm_1"/>
    <property type="match status" value="1"/>
</dbReference>
<dbReference type="NCBIfam" id="NF010713">
    <property type="entry name" value="PRK14115.1"/>
    <property type="match status" value="1"/>
</dbReference>
<dbReference type="PANTHER" id="PTHR11931">
    <property type="entry name" value="PHOSPHOGLYCERATE MUTASE"/>
    <property type="match status" value="1"/>
</dbReference>
<dbReference type="Pfam" id="PF00300">
    <property type="entry name" value="His_Phos_1"/>
    <property type="match status" value="2"/>
</dbReference>
<dbReference type="PIRSF" id="PIRSF000709">
    <property type="entry name" value="6PFK_2-Ptase"/>
    <property type="match status" value="1"/>
</dbReference>
<dbReference type="SMART" id="SM00855">
    <property type="entry name" value="PGAM"/>
    <property type="match status" value="1"/>
</dbReference>
<dbReference type="SUPFAM" id="SSF53254">
    <property type="entry name" value="Phosphoglycerate mutase-like"/>
    <property type="match status" value="1"/>
</dbReference>
<dbReference type="PROSITE" id="PS00175">
    <property type="entry name" value="PG_MUTASE"/>
    <property type="match status" value="1"/>
</dbReference>
<reference key="1">
    <citation type="submission" date="2008-10" db="EMBL/GenBank/DDBJ databases">
        <title>Complete sequence of Desulfovibrio vulgaris str. 'Miyazaki F'.</title>
        <authorList>
            <person name="Lucas S."/>
            <person name="Copeland A."/>
            <person name="Lapidus A."/>
            <person name="Glavina del Rio T."/>
            <person name="Dalin E."/>
            <person name="Tice H."/>
            <person name="Bruce D."/>
            <person name="Goodwin L."/>
            <person name="Pitluck S."/>
            <person name="Sims D."/>
            <person name="Brettin T."/>
            <person name="Detter J.C."/>
            <person name="Han C."/>
            <person name="Larimer F."/>
            <person name="Land M."/>
            <person name="Hauser L."/>
            <person name="Kyrpides N."/>
            <person name="Mikhailova N."/>
            <person name="Hazen T.C."/>
            <person name="Richardson P."/>
        </authorList>
    </citation>
    <scope>NUCLEOTIDE SEQUENCE [LARGE SCALE GENOMIC DNA]</scope>
    <source>
        <strain>DSM 19637 / Miyazaki F</strain>
    </source>
</reference>
<organism>
    <name type="scientific">Nitratidesulfovibrio vulgaris (strain DSM 19637 / Miyazaki F)</name>
    <name type="common">Desulfovibrio vulgaris</name>
    <dbReference type="NCBI Taxonomy" id="883"/>
    <lineage>
        <taxon>Bacteria</taxon>
        <taxon>Pseudomonadati</taxon>
        <taxon>Thermodesulfobacteriota</taxon>
        <taxon>Desulfovibrionia</taxon>
        <taxon>Desulfovibrionales</taxon>
        <taxon>Desulfovibrionaceae</taxon>
        <taxon>Nitratidesulfovibrio</taxon>
    </lineage>
</organism>
<feature type="chain" id="PRO_1000135942" description="2,3-bisphosphoglycerate-dependent phosphoglycerate mutase">
    <location>
        <begin position="1"/>
        <end position="249"/>
    </location>
</feature>
<feature type="region of interest" description="Disordered" evidence="2">
    <location>
        <begin position="115"/>
        <end position="137"/>
    </location>
</feature>
<feature type="active site" description="Tele-phosphohistidine intermediate" evidence="1">
    <location>
        <position position="9"/>
    </location>
</feature>
<feature type="active site" description="Proton donor/acceptor" evidence="1">
    <location>
        <position position="87"/>
    </location>
</feature>
<feature type="binding site" evidence="1">
    <location>
        <begin position="8"/>
        <end position="15"/>
    </location>
    <ligand>
        <name>substrate</name>
    </ligand>
</feature>
<feature type="binding site" evidence="1">
    <location>
        <begin position="21"/>
        <end position="22"/>
    </location>
    <ligand>
        <name>substrate</name>
    </ligand>
</feature>
<feature type="binding site" evidence="1">
    <location>
        <position position="60"/>
    </location>
    <ligand>
        <name>substrate</name>
    </ligand>
</feature>
<feature type="binding site" evidence="1">
    <location>
        <begin position="87"/>
        <end position="90"/>
    </location>
    <ligand>
        <name>substrate</name>
    </ligand>
</feature>
<feature type="binding site" evidence="1">
    <location>
        <position position="98"/>
    </location>
    <ligand>
        <name>substrate</name>
    </ligand>
</feature>
<feature type="binding site" evidence="1">
    <location>
        <begin position="114"/>
        <end position="115"/>
    </location>
    <ligand>
        <name>substrate</name>
    </ligand>
</feature>
<feature type="binding site" evidence="1">
    <location>
        <begin position="183"/>
        <end position="184"/>
    </location>
    <ligand>
        <name>substrate</name>
    </ligand>
</feature>
<feature type="site" description="Transition state stabilizer" evidence="1">
    <location>
        <position position="182"/>
    </location>
</feature>
<keyword id="KW-0312">Gluconeogenesis</keyword>
<keyword id="KW-0324">Glycolysis</keyword>
<keyword id="KW-0413">Isomerase</keyword>
<accession>B8DLN4</accession>